<evidence type="ECO:0000255" key="1">
    <source>
        <dbReference type="HAMAP-Rule" id="MF_00137"/>
    </source>
</evidence>
<feature type="chain" id="PRO_1000095980" description="Phosphoribosylaminoimidazole-succinocarboxamide synthase">
    <location>
        <begin position="1"/>
        <end position="293"/>
    </location>
</feature>
<accession>A8ZVI6</accession>
<organism>
    <name type="scientific">Desulfosudis oleivorans (strain DSM 6200 / JCM 39069 / Hxd3)</name>
    <name type="common">Desulfococcus oleovorans</name>
    <dbReference type="NCBI Taxonomy" id="96561"/>
    <lineage>
        <taxon>Bacteria</taxon>
        <taxon>Pseudomonadati</taxon>
        <taxon>Thermodesulfobacteriota</taxon>
        <taxon>Desulfobacteria</taxon>
        <taxon>Desulfobacterales</taxon>
        <taxon>Desulfosudaceae</taxon>
        <taxon>Desulfosudis</taxon>
    </lineage>
</organism>
<comment type="catalytic activity">
    <reaction evidence="1">
        <text>5-amino-1-(5-phospho-D-ribosyl)imidazole-4-carboxylate + L-aspartate + ATP = (2S)-2-[5-amino-1-(5-phospho-beta-D-ribosyl)imidazole-4-carboxamido]succinate + ADP + phosphate + 2 H(+)</text>
        <dbReference type="Rhea" id="RHEA:22628"/>
        <dbReference type="ChEBI" id="CHEBI:15378"/>
        <dbReference type="ChEBI" id="CHEBI:29991"/>
        <dbReference type="ChEBI" id="CHEBI:30616"/>
        <dbReference type="ChEBI" id="CHEBI:43474"/>
        <dbReference type="ChEBI" id="CHEBI:58443"/>
        <dbReference type="ChEBI" id="CHEBI:77657"/>
        <dbReference type="ChEBI" id="CHEBI:456216"/>
        <dbReference type="EC" id="6.3.2.6"/>
    </reaction>
</comment>
<comment type="pathway">
    <text evidence="1">Purine metabolism; IMP biosynthesis via de novo pathway; 5-amino-1-(5-phospho-D-ribosyl)imidazole-4-carboxamide from 5-amino-1-(5-phospho-D-ribosyl)imidazole-4-carboxylate: step 1/2.</text>
</comment>
<comment type="similarity">
    <text evidence="1">Belongs to the SAICAR synthetase family.</text>
</comment>
<protein>
    <recommendedName>
        <fullName evidence="1">Phosphoribosylaminoimidazole-succinocarboxamide synthase</fullName>
        <ecNumber evidence="1">6.3.2.6</ecNumber>
    </recommendedName>
    <alternativeName>
        <fullName evidence="1">SAICAR synthetase</fullName>
    </alternativeName>
</protein>
<reference key="1">
    <citation type="submission" date="2007-10" db="EMBL/GenBank/DDBJ databases">
        <title>Complete sequence of Desulfococcus oleovorans Hxd3.</title>
        <authorList>
            <consortium name="US DOE Joint Genome Institute"/>
            <person name="Copeland A."/>
            <person name="Lucas S."/>
            <person name="Lapidus A."/>
            <person name="Barry K."/>
            <person name="Glavina del Rio T."/>
            <person name="Dalin E."/>
            <person name="Tice H."/>
            <person name="Pitluck S."/>
            <person name="Kiss H."/>
            <person name="Brettin T."/>
            <person name="Bruce D."/>
            <person name="Detter J.C."/>
            <person name="Han C."/>
            <person name="Schmutz J."/>
            <person name="Larimer F."/>
            <person name="Land M."/>
            <person name="Hauser L."/>
            <person name="Kyrpides N."/>
            <person name="Kim E."/>
            <person name="Wawrik B."/>
            <person name="Richardson P."/>
        </authorList>
    </citation>
    <scope>NUCLEOTIDE SEQUENCE [LARGE SCALE GENOMIC DNA]</scope>
    <source>
        <strain>DSM 6200 / JCM 39069 / Hxd3</strain>
    </source>
</reference>
<sequence length="293" mass="32757">MDQVVYHTDFPGLNLLKRGKVRDVYDFGDRLLIVATDRLSAFDVVMPDPIPGKGEILTQISLFWFDQVKDIVRNHLISSDVNDYPEACRPYAETLAGRSMLVTKTEPLAIECVVRGYLSGSGWKSYQKDRTVCGISLPDGLRESDRLPEPIFTPSTKAEAGQHDINISFDEAANIAGRETTEKARDLSLAIYRRGVEVADARGIIIADTKFEFGFVDGELILIDEVLTPDSSRFWPRDGYAPGGPQQSFDKQYVRDYLLSLNWNQKPPAPDLPPDVVANTRKKYSEALDLLVG</sequence>
<name>PUR7_DESOH</name>
<gene>
    <name evidence="1" type="primary">purC</name>
    <name type="ordered locus">Dole_2369</name>
</gene>
<keyword id="KW-0067">ATP-binding</keyword>
<keyword id="KW-0436">Ligase</keyword>
<keyword id="KW-0547">Nucleotide-binding</keyword>
<keyword id="KW-0658">Purine biosynthesis</keyword>
<keyword id="KW-1185">Reference proteome</keyword>
<dbReference type="EC" id="6.3.2.6" evidence="1"/>
<dbReference type="EMBL" id="CP000859">
    <property type="protein sequence ID" value="ABW68173.1"/>
    <property type="molecule type" value="Genomic_DNA"/>
</dbReference>
<dbReference type="RefSeq" id="WP_012175785.1">
    <property type="nucleotide sequence ID" value="NC_009943.1"/>
</dbReference>
<dbReference type="SMR" id="A8ZVI6"/>
<dbReference type="STRING" id="96561.Dole_2369"/>
<dbReference type="KEGG" id="dol:Dole_2369"/>
<dbReference type="eggNOG" id="COG0152">
    <property type="taxonomic scope" value="Bacteria"/>
</dbReference>
<dbReference type="HOGENOM" id="CLU_045637_0_0_7"/>
<dbReference type="OrthoDB" id="9801549at2"/>
<dbReference type="UniPathway" id="UPA00074">
    <property type="reaction ID" value="UER00131"/>
</dbReference>
<dbReference type="Proteomes" id="UP000008561">
    <property type="component" value="Chromosome"/>
</dbReference>
<dbReference type="GO" id="GO:0005737">
    <property type="term" value="C:cytoplasm"/>
    <property type="evidence" value="ECO:0007669"/>
    <property type="project" value="TreeGrafter"/>
</dbReference>
<dbReference type="GO" id="GO:0005524">
    <property type="term" value="F:ATP binding"/>
    <property type="evidence" value="ECO:0007669"/>
    <property type="project" value="UniProtKB-KW"/>
</dbReference>
<dbReference type="GO" id="GO:0004639">
    <property type="term" value="F:phosphoribosylaminoimidazolesuccinocarboxamide synthase activity"/>
    <property type="evidence" value="ECO:0007669"/>
    <property type="project" value="UniProtKB-UniRule"/>
</dbReference>
<dbReference type="GO" id="GO:0006189">
    <property type="term" value="P:'de novo' IMP biosynthetic process"/>
    <property type="evidence" value="ECO:0007669"/>
    <property type="project" value="UniProtKB-UniRule"/>
</dbReference>
<dbReference type="CDD" id="cd01414">
    <property type="entry name" value="SAICAR_synt_Sc"/>
    <property type="match status" value="1"/>
</dbReference>
<dbReference type="FunFam" id="3.30.470.20:FF:000015">
    <property type="entry name" value="Phosphoribosylaminoimidazole-succinocarboxamide synthase"/>
    <property type="match status" value="1"/>
</dbReference>
<dbReference type="Gene3D" id="3.30.470.20">
    <property type="entry name" value="ATP-grasp fold, B domain"/>
    <property type="match status" value="1"/>
</dbReference>
<dbReference type="Gene3D" id="3.30.200.20">
    <property type="entry name" value="Phosphorylase Kinase, domain 1"/>
    <property type="match status" value="1"/>
</dbReference>
<dbReference type="HAMAP" id="MF_00137">
    <property type="entry name" value="SAICAR_synth"/>
    <property type="match status" value="1"/>
</dbReference>
<dbReference type="InterPro" id="IPR028923">
    <property type="entry name" value="SAICAR_synt/ADE2_N"/>
</dbReference>
<dbReference type="InterPro" id="IPR001636">
    <property type="entry name" value="SAICAR_synth"/>
</dbReference>
<dbReference type="InterPro" id="IPR018236">
    <property type="entry name" value="SAICAR_synthetase_CS"/>
</dbReference>
<dbReference type="NCBIfam" id="NF010568">
    <property type="entry name" value="PRK13961.1"/>
    <property type="match status" value="1"/>
</dbReference>
<dbReference type="NCBIfam" id="TIGR00081">
    <property type="entry name" value="purC"/>
    <property type="match status" value="1"/>
</dbReference>
<dbReference type="PANTHER" id="PTHR43700">
    <property type="entry name" value="PHOSPHORIBOSYLAMINOIMIDAZOLE-SUCCINOCARBOXAMIDE SYNTHASE"/>
    <property type="match status" value="1"/>
</dbReference>
<dbReference type="PANTHER" id="PTHR43700:SF1">
    <property type="entry name" value="PHOSPHORIBOSYLAMINOIMIDAZOLE-SUCCINOCARBOXAMIDE SYNTHASE"/>
    <property type="match status" value="1"/>
</dbReference>
<dbReference type="Pfam" id="PF01259">
    <property type="entry name" value="SAICAR_synt"/>
    <property type="match status" value="1"/>
</dbReference>
<dbReference type="SUPFAM" id="SSF56104">
    <property type="entry name" value="SAICAR synthase-like"/>
    <property type="match status" value="1"/>
</dbReference>
<dbReference type="PROSITE" id="PS01058">
    <property type="entry name" value="SAICAR_SYNTHETASE_2"/>
    <property type="match status" value="1"/>
</dbReference>
<proteinExistence type="inferred from homology"/>